<reference key="1">
    <citation type="journal article" date="2004" name="Nat. Genet.">
        <title>Comparison of genome degradation in Paratyphi A and Typhi, human-restricted serovars of Salmonella enterica that cause typhoid.</title>
        <authorList>
            <person name="McClelland M."/>
            <person name="Sanderson K.E."/>
            <person name="Clifton S.W."/>
            <person name="Latreille P."/>
            <person name="Porwollik S."/>
            <person name="Sabo A."/>
            <person name="Meyer R."/>
            <person name="Bieri T."/>
            <person name="Ozersky P."/>
            <person name="McLellan M."/>
            <person name="Harkins C.R."/>
            <person name="Wang C."/>
            <person name="Nguyen C."/>
            <person name="Berghoff A."/>
            <person name="Elliott G."/>
            <person name="Kohlberg S."/>
            <person name="Strong C."/>
            <person name="Du F."/>
            <person name="Carter J."/>
            <person name="Kremizki C."/>
            <person name="Layman D."/>
            <person name="Leonard S."/>
            <person name="Sun H."/>
            <person name="Fulton L."/>
            <person name="Nash W."/>
            <person name="Miner T."/>
            <person name="Minx P."/>
            <person name="Delehaunty K."/>
            <person name="Fronick C."/>
            <person name="Magrini V."/>
            <person name="Nhan M."/>
            <person name="Warren W."/>
            <person name="Florea L."/>
            <person name="Spieth J."/>
            <person name="Wilson R.K."/>
        </authorList>
    </citation>
    <scope>NUCLEOTIDE SEQUENCE [LARGE SCALE GENOMIC DNA]</scope>
    <source>
        <strain>ATCC 9150 / SARB42</strain>
    </source>
</reference>
<proteinExistence type="inferred from homology"/>
<name>RLMD_SALPA</name>
<accession>Q5PEJ4</accession>
<protein>
    <recommendedName>
        <fullName evidence="2">23S rRNA (uracil(1939)-C(5))-methyltransferase RlmD</fullName>
        <ecNumber evidence="2">2.1.1.190</ecNumber>
    </recommendedName>
    <alternativeName>
        <fullName evidence="2">23S rRNA(m5U1939)-methyltransferase</fullName>
    </alternativeName>
</protein>
<sequence>MAQFYSAKRRVTTRQIITVKVNDLDSFGQGVARHNGKALFIPGLLPEESAEVIITEDKKQFARARVSRRLNDSPERETPRCPHFGVCGGCQQQHVGIDLQQRSKSAALARLMKHEVNDIIAGAPWGYRRRARLSLNCPPDKPLQMGFRKAGSSDIVNVEQCPVLAPQLAALLPRIRACLASLHGTRHLGHVELVQAGSGTLMILRHTAPLSAADKEKLERFSHSEGLSLFLAPFSEILETVSGEAPWYDSHGLRLAFSPRDFIQVNEAVNQQMVARALEWLDVRAEDRVLDLFCGMGNFTLPLATRAASVVGVEGVPALVEKGRENAIRNGLHNVTFFHENLEEDVTKQPWAKNGFDKVLLDPARAGATGVMRHIIKLKPIRIVYVSCNPATLARDSEALVNAGYEVTRLAMLDMFPHTGHLESMVLFERM</sequence>
<feature type="initiator methionine" description="Removed" evidence="1">
    <location>
        <position position="1"/>
    </location>
</feature>
<feature type="chain" id="PRO_0000229882" description="23S rRNA (uracil(1939)-C(5))-methyltransferase RlmD">
    <location>
        <begin position="2"/>
        <end position="431"/>
    </location>
</feature>
<feature type="domain" description="TRAM" evidence="2">
    <location>
        <begin position="10"/>
        <end position="68"/>
    </location>
</feature>
<feature type="active site" description="Nucleophile" evidence="2">
    <location>
        <position position="388"/>
    </location>
</feature>
<feature type="binding site" evidence="2">
    <location>
        <position position="81"/>
    </location>
    <ligand>
        <name>[4Fe-4S] cluster</name>
        <dbReference type="ChEBI" id="CHEBI:49883"/>
    </ligand>
</feature>
<feature type="binding site" evidence="2">
    <location>
        <position position="87"/>
    </location>
    <ligand>
        <name>[4Fe-4S] cluster</name>
        <dbReference type="ChEBI" id="CHEBI:49883"/>
    </ligand>
</feature>
<feature type="binding site" evidence="2">
    <location>
        <position position="90"/>
    </location>
    <ligand>
        <name>[4Fe-4S] cluster</name>
        <dbReference type="ChEBI" id="CHEBI:49883"/>
    </ligand>
</feature>
<feature type="binding site" evidence="2">
    <location>
        <position position="161"/>
    </location>
    <ligand>
        <name>[4Fe-4S] cluster</name>
        <dbReference type="ChEBI" id="CHEBI:49883"/>
    </ligand>
</feature>
<feature type="binding site" evidence="2">
    <location>
        <position position="264"/>
    </location>
    <ligand>
        <name>S-adenosyl-L-methionine</name>
        <dbReference type="ChEBI" id="CHEBI:59789"/>
    </ligand>
</feature>
<feature type="binding site" evidence="2">
    <location>
        <position position="293"/>
    </location>
    <ligand>
        <name>S-adenosyl-L-methionine</name>
        <dbReference type="ChEBI" id="CHEBI:59789"/>
    </ligand>
</feature>
<feature type="binding site" evidence="2">
    <location>
        <position position="298"/>
    </location>
    <ligand>
        <name>S-adenosyl-L-methionine</name>
        <dbReference type="ChEBI" id="CHEBI:59789"/>
    </ligand>
</feature>
<feature type="binding site" evidence="2">
    <location>
        <position position="314"/>
    </location>
    <ligand>
        <name>S-adenosyl-L-methionine</name>
        <dbReference type="ChEBI" id="CHEBI:59789"/>
    </ligand>
</feature>
<feature type="binding site" evidence="2">
    <location>
        <position position="341"/>
    </location>
    <ligand>
        <name>S-adenosyl-L-methionine</name>
        <dbReference type="ChEBI" id="CHEBI:59789"/>
    </ligand>
</feature>
<feature type="binding site" evidence="2">
    <location>
        <position position="362"/>
    </location>
    <ligand>
        <name>S-adenosyl-L-methionine</name>
        <dbReference type="ChEBI" id="CHEBI:59789"/>
    </ligand>
</feature>
<comment type="function">
    <text evidence="2">Catalyzes the formation of 5-methyl-uridine at position 1939 (m5U1939) in 23S rRNA.</text>
</comment>
<comment type="catalytic activity">
    <reaction evidence="2">
        <text>uridine(1939) in 23S rRNA + S-adenosyl-L-methionine = 5-methyluridine(1939) in 23S rRNA + S-adenosyl-L-homocysteine + H(+)</text>
        <dbReference type="Rhea" id="RHEA:42908"/>
        <dbReference type="Rhea" id="RHEA-COMP:10278"/>
        <dbReference type="Rhea" id="RHEA-COMP:10279"/>
        <dbReference type="ChEBI" id="CHEBI:15378"/>
        <dbReference type="ChEBI" id="CHEBI:57856"/>
        <dbReference type="ChEBI" id="CHEBI:59789"/>
        <dbReference type="ChEBI" id="CHEBI:65315"/>
        <dbReference type="ChEBI" id="CHEBI:74447"/>
        <dbReference type="EC" id="2.1.1.190"/>
    </reaction>
</comment>
<comment type="similarity">
    <text evidence="2">Belongs to the class I-like SAM-binding methyltransferase superfamily. RNA M5U methyltransferase family. RlmD subfamily.</text>
</comment>
<organism>
    <name type="scientific">Salmonella paratyphi A (strain ATCC 9150 / SARB42)</name>
    <dbReference type="NCBI Taxonomy" id="295319"/>
    <lineage>
        <taxon>Bacteria</taxon>
        <taxon>Pseudomonadati</taxon>
        <taxon>Pseudomonadota</taxon>
        <taxon>Gammaproteobacteria</taxon>
        <taxon>Enterobacterales</taxon>
        <taxon>Enterobacteriaceae</taxon>
        <taxon>Salmonella</taxon>
    </lineage>
</organism>
<evidence type="ECO:0000250" key="1"/>
<evidence type="ECO:0000255" key="2">
    <source>
        <dbReference type="HAMAP-Rule" id="MF_01010"/>
    </source>
</evidence>
<gene>
    <name evidence="2" type="primary">rlmD</name>
    <name type="synonym">rumA</name>
    <name type="ordered locus">SPA2822</name>
</gene>
<dbReference type="EC" id="2.1.1.190" evidence="2"/>
<dbReference type="EMBL" id="CP000026">
    <property type="protein sequence ID" value="AAV78672.1"/>
    <property type="molecule type" value="Genomic_DNA"/>
</dbReference>
<dbReference type="RefSeq" id="WP_000046842.1">
    <property type="nucleotide sequence ID" value="NC_006511.1"/>
</dbReference>
<dbReference type="SMR" id="Q5PEJ4"/>
<dbReference type="KEGG" id="spt:SPA2822"/>
<dbReference type="HOGENOM" id="CLU_014689_8_2_6"/>
<dbReference type="Proteomes" id="UP000008185">
    <property type="component" value="Chromosome"/>
</dbReference>
<dbReference type="GO" id="GO:0051539">
    <property type="term" value="F:4 iron, 4 sulfur cluster binding"/>
    <property type="evidence" value="ECO:0007669"/>
    <property type="project" value="UniProtKB-KW"/>
</dbReference>
<dbReference type="GO" id="GO:0005506">
    <property type="term" value="F:iron ion binding"/>
    <property type="evidence" value="ECO:0007669"/>
    <property type="project" value="UniProtKB-UniRule"/>
</dbReference>
<dbReference type="GO" id="GO:0003723">
    <property type="term" value="F:RNA binding"/>
    <property type="evidence" value="ECO:0007669"/>
    <property type="project" value="InterPro"/>
</dbReference>
<dbReference type="GO" id="GO:0070041">
    <property type="term" value="F:rRNA (uridine-C5-)-methyltransferase activity"/>
    <property type="evidence" value="ECO:0007669"/>
    <property type="project" value="UniProtKB-UniRule"/>
</dbReference>
<dbReference type="GO" id="GO:0070475">
    <property type="term" value="P:rRNA base methylation"/>
    <property type="evidence" value="ECO:0007669"/>
    <property type="project" value="TreeGrafter"/>
</dbReference>
<dbReference type="CDD" id="cd02440">
    <property type="entry name" value="AdoMet_MTases"/>
    <property type="match status" value="1"/>
</dbReference>
<dbReference type="FunFam" id="3.40.50.150:FF:000009">
    <property type="entry name" value="23S rRNA (Uracil(1939)-C(5))-methyltransferase RlmD"/>
    <property type="match status" value="1"/>
</dbReference>
<dbReference type="FunFam" id="2.40.50.1070:FF:000004">
    <property type="entry name" value="23S rRNA (uracil(1939)-C(5))-methyltransferase RlmD"/>
    <property type="match status" value="1"/>
</dbReference>
<dbReference type="FunFam" id="2.40.50.140:FF:000097">
    <property type="entry name" value="23S rRNA (uracil(1939)-C(5))-methyltransferase RlmD"/>
    <property type="match status" value="1"/>
</dbReference>
<dbReference type="Gene3D" id="2.40.50.1070">
    <property type="match status" value="1"/>
</dbReference>
<dbReference type="Gene3D" id="2.40.50.140">
    <property type="entry name" value="Nucleic acid-binding proteins"/>
    <property type="match status" value="1"/>
</dbReference>
<dbReference type="Gene3D" id="3.40.50.150">
    <property type="entry name" value="Vaccinia Virus protein VP39"/>
    <property type="match status" value="1"/>
</dbReference>
<dbReference type="HAMAP" id="MF_01010">
    <property type="entry name" value="23SrRNA_methyltr_RlmD"/>
    <property type="match status" value="1"/>
</dbReference>
<dbReference type="InterPro" id="IPR001566">
    <property type="entry name" value="23S_rRNA_MeTrfase_RlmD"/>
</dbReference>
<dbReference type="InterPro" id="IPR030390">
    <property type="entry name" value="MeTrfase_TrmA_AS"/>
</dbReference>
<dbReference type="InterPro" id="IPR030391">
    <property type="entry name" value="MeTrfase_TrmA_CS"/>
</dbReference>
<dbReference type="InterPro" id="IPR012340">
    <property type="entry name" value="NA-bd_OB-fold"/>
</dbReference>
<dbReference type="InterPro" id="IPR029063">
    <property type="entry name" value="SAM-dependent_MTases_sf"/>
</dbReference>
<dbReference type="InterPro" id="IPR002792">
    <property type="entry name" value="TRAM_dom"/>
</dbReference>
<dbReference type="InterPro" id="IPR010280">
    <property type="entry name" value="U5_MeTrfase_fam"/>
</dbReference>
<dbReference type="NCBIfam" id="NF009639">
    <property type="entry name" value="PRK13168.1"/>
    <property type="match status" value="1"/>
</dbReference>
<dbReference type="NCBIfam" id="TIGR00479">
    <property type="entry name" value="rumA"/>
    <property type="match status" value="1"/>
</dbReference>
<dbReference type="PANTHER" id="PTHR11061:SF49">
    <property type="entry name" value="23S RRNA (URACIL(1939)-C(5))-METHYLTRANSFERASE RLMD"/>
    <property type="match status" value="1"/>
</dbReference>
<dbReference type="PANTHER" id="PTHR11061">
    <property type="entry name" value="RNA M5U METHYLTRANSFERASE"/>
    <property type="match status" value="1"/>
</dbReference>
<dbReference type="Pfam" id="PF01938">
    <property type="entry name" value="TRAM"/>
    <property type="match status" value="1"/>
</dbReference>
<dbReference type="Pfam" id="PF05958">
    <property type="entry name" value="tRNA_U5-meth_tr"/>
    <property type="match status" value="1"/>
</dbReference>
<dbReference type="SUPFAM" id="SSF50249">
    <property type="entry name" value="Nucleic acid-binding proteins"/>
    <property type="match status" value="1"/>
</dbReference>
<dbReference type="SUPFAM" id="SSF53335">
    <property type="entry name" value="S-adenosyl-L-methionine-dependent methyltransferases"/>
    <property type="match status" value="1"/>
</dbReference>
<dbReference type="PROSITE" id="PS51687">
    <property type="entry name" value="SAM_MT_RNA_M5U"/>
    <property type="match status" value="1"/>
</dbReference>
<dbReference type="PROSITE" id="PS50926">
    <property type="entry name" value="TRAM"/>
    <property type="match status" value="1"/>
</dbReference>
<dbReference type="PROSITE" id="PS01230">
    <property type="entry name" value="TRMA_1"/>
    <property type="match status" value="1"/>
</dbReference>
<dbReference type="PROSITE" id="PS01231">
    <property type="entry name" value="TRMA_2"/>
    <property type="match status" value="1"/>
</dbReference>
<keyword id="KW-0004">4Fe-4S</keyword>
<keyword id="KW-0408">Iron</keyword>
<keyword id="KW-0411">Iron-sulfur</keyword>
<keyword id="KW-0479">Metal-binding</keyword>
<keyword id="KW-0489">Methyltransferase</keyword>
<keyword id="KW-0698">rRNA processing</keyword>
<keyword id="KW-0949">S-adenosyl-L-methionine</keyword>
<keyword id="KW-0808">Transferase</keyword>